<organism>
    <name type="scientific">Homo sapiens</name>
    <name type="common">Human</name>
    <dbReference type="NCBI Taxonomy" id="9606"/>
    <lineage>
        <taxon>Eukaryota</taxon>
        <taxon>Metazoa</taxon>
        <taxon>Chordata</taxon>
        <taxon>Craniata</taxon>
        <taxon>Vertebrata</taxon>
        <taxon>Euteleostomi</taxon>
        <taxon>Mammalia</taxon>
        <taxon>Eutheria</taxon>
        <taxon>Euarchontoglires</taxon>
        <taxon>Primates</taxon>
        <taxon>Haplorrhini</taxon>
        <taxon>Catarrhini</taxon>
        <taxon>Hominidae</taxon>
        <taxon>Homo</taxon>
    </lineage>
</organism>
<feature type="signal peptide" evidence="1">
    <location>
        <begin position="1"/>
        <end position="22"/>
    </location>
</feature>
<feature type="chain" id="PRO_0000317613" description="Collagen alpha-1(XXI) chain">
    <location>
        <begin position="23"/>
        <end position="957"/>
    </location>
</feature>
<feature type="domain" description="VWFA" evidence="2">
    <location>
        <begin position="37"/>
        <end position="211"/>
    </location>
</feature>
<feature type="domain" description="Laminin G-like">
    <location>
        <begin position="230"/>
        <end position="412"/>
    </location>
</feature>
<feature type="domain" description="Collagen-like 1">
    <location>
        <begin position="448"/>
        <end position="500"/>
    </location>
</feature>
<feature type="domain" description="Collagen-like 2">
    <location>
        <begin position="501"/>
        <end position="542"/>
    </location>
</feature>
<feature type="domain" description="Collagen-like 3">
    <location>
        <begin position="543"/>
        <end position="594"/>
    </location>
</feature>
<feature type="domain" description="Collagen-like 4">
    <location>
        <begin position="681"/>
        <end position="733"/>
    </location>
</feature>
<feature type="domain" description="Collagen-like 5">
    <location>
        <begin position="734"/>
        <end position="787"/>
    </location>
</feature>
<feature type="domain" description="Collagen-like 6">
    <location>
        <begin position="825"/>
        <end position="882"/>
    </location>
</feature>
<feature type="domain" description="Collagen-like 7">
    <location>
        <begin position="884"/>
        <end position="934"/>
    </location>
</feature>
<feature type="region of interest" description="Disordered" evidence="3">
    <location>
        <begin position="448"/>
        <end position="786"/>
    </location>
</feature>
<feature type="region of interest" description="Disordered" evidence="3">
    <location>
        <begin position="825"/>
        <end position="938"/>
    </location>
</feature>
<feature type="compositionally biased region" description="Low complexity" evidence="3">
    <location>
        <begin position="451"/>
        <end position="462"/>
    </location>
</feature>
<feature type="compositionally biased region" description="Low complexity" evidence="3">
    <location>
        <begin position="471"/>
        <end position="481"/>
    </location>
</feature>
<feature type="compositionally biased region" description="Basic and acidic residues" evidence="3">
    <location>
        <begin position="507"/>
        <end position="517"/>
    </location>
</feature>
<feature type="compositionally biased region" description="Low complexity" evidence="3">
    <location>
        <begin position="618"/>
        <end position="637"/>
    </location>
</feature>
<feature type="compositionally biased region" description="Low complexity" evidence="3">
    <location>
        <begin position="705"/>
        <end position="729"/>
    </location>
</feature>
<feature type="compositionally biased region" description="Basic and acidic residues" evidence="3">
    <location>
        <begin position="732"/>
        <end position="742"/>
    </location>
</feature>
<feature type="compositionally biased region" description="Pro residues" evidence="3">
    <location>
        <begin position="829"/>
        <end position="838"/>
    </location>
</feature>
<feature type="compositionally biased region" description="Low complexity" evidence="3">
    <location>
        <begin position="839"/>
        <end position="874"/>
    </location>
</feature>
<feature type="compositionally biased region" description="Pro residues" evidence="3">
    <location>
        <begin position="889"/>
        <end position="900"/>
    </location>
</feature>
<feature type="glycosylation site" description="N-linked (GlcNAc...) asparagine" evidence="1">
    <location>
        <position position="62"/>
    </location>
</feature>
<feature type="splice variant" id="VSP_031083" description="In isoform 2." evidence="8">
    <location>
        <begin position="1"/>
        <end position="600"/>
    </location>
</feature>
<feature type="splice variant" id="VSP_031084" description="In isoform 3." evidence="7">
    <location>
        <begin position="427"/>
        <end position="429"/>
    </location>
</feature>
<feature type="splice variant" id="VSP_031085" description="In isoform 2." evidence="8">
    <original>RGEP</original>
    <variation>MIAS</variation>
    <location>
        <begin position="601"/>
        <end position="604"/>
    </location>
</feature>
<feature type="splice variant" id="VSP_031086" description="In isoform 2." evidence="8">
    <location>
        <begin position="803"/>
        <end position="836"/>
    </location>
</feature>
<feature type="sequence variant" id="VAR_038555" description="In dbSNP:rs2764043.">
    <original>L</original>
    <variation>P</variation>
    <location>
        <position position="277"/>
    </location>
</feature>
<feature type="sequence variant" id="VAR_038556" description="In dbSNP:rs35471617." evidence="6">
    <original>T</original>
    <variation>M</variation>
    <location>
        <position position="343"/>
    </location>
</feature>
<feature type="sequence variant" id="VAR_038557" description="In dbSNP:rs35583895.">
    <original>I</original>
    <variation>T</variation>
    <location>
        <position position="495"/>
    </location>
</feature>
<feature type="sequence variant" id="VAR_038558" description="In dbSNP:rs9382581.">
    <original>G</original>
    <variation>S</variation>
    <location>
        <position position="560"/>
    </location>
</feature>
<feature type="sequence variant" id="VAR_038559" description="In dbSNP:rs9464337.">
    <original>A</original>
    <variation>D</variation>
    <location>
        <position position="747"/>
    </location>
</feature>
<feature type="sequence variant" id="VAR_038560" description="In dbSNP:rs12209452.">
    <original>L</original>
    <variation>P</variation>
    <location>
        <position position="821"/>
    </location>
</feature>
<feature type="sequence variant" id="VAR_038561" description="In dbSNP:rs1555131.">
    <original>P</original>
    <variation>A</variation>
    <location>
        <position position="827"/>
    </location>
</feature>
<feature type="sequence conflict" description="In Ref. 3; CAB66559." evidence="9" ref="3">
    <original>A</original>
    <variation>D</variation>
    <location>
        <position position="129"/>
    </location>
</feature>
<feature type="sequence conflict" description="In Ref. 7; AAH45597." evidence="9" ref="7">
    <original>L</original>
    <variation>W</variation>
    <location>
        <position position="780"/>
    </location>
</feature>
<feature type="sequence conflict" description="In Ref. 7; AAH45597." evidence="9" ref="7">
    <original>R</original>
    <variation>K</variation>
    <location>
        <position position="802"/>
    </location>
</feature>
<name>COLA1_HUMAN</name>
<dbReference type="EMBL" id="AF414088">
    <property type="protein sequence ID" value="AAL02227.1"/>
    <property type="molecule type" value="mRNA"/>
</dbReference>
<dbReference type="EMBL" id="AF330693">
    <property type="protein sequence ID" value="AAL50033.1"/>
    <property type="molecule type" value="mRNA"/>
</dbReference>
<dbReference type="EMBL" id="AF438327">
    <property type="protein sequence ID" value="AAL86699.1"/>
    <property type="molecule type" value="Genomic_DNA"/>
</dbReference>
<dbReference type="EMBL" id="AL136624">
    <property type="protein sequence ID" value="CAB66559.1"/>
    <property type="molecule type" value="mRNA"/>
</dbReference>
<dbReference type="EMBL" id="AF370383">
    <property type="protein sequence ID" value="AAQ15219.1"/>
    <property type="molecule type" value="mRNA"/>
</dbReference>
<dbReference type="EMBL" id="AK313398">
    <property type="protein sequence ID" value="BAG36196.1"/>
    <property type="molecule type" value="mRNA"/>
</dbReference>
<dbReference type="EMBL" id="AL031782">
    <property type="status" value="NOT_ANNOTATED_CDS"/>
    <property type="molecule type" value="Genomic_DNA"/>
</dbReference>
<dbReference type="EMBL" id="AL034452">
    <property type="status" value="NOT_ANNOTATED_CDS"/>
    <property type="molecule type" value="Genomic_DNA"/>
</dbReference>
<dbReference type="EMBL" id="AL513530">
    <property type="status" value="NOT_ANNOTATED_CDS"/>
    <property type="molecule type" value="Genomic_DNA"/>
</dbReference>
<dbReference type="EMBL" id="BC045597">
    <property type="protein sequence ID" value="AAH45597.1"/>
    <property type="status" value="ALT_FRAME"/>
    <property type="molecule type" value="mRNA"/>
</dbReference>
<dbReference type="EMBL" id="BC126108">
    <property type="protein sequence ID" value="AAI26109.1"/>
    <property type="molecule type" value="mRNA"/>
</dbReference>
<dbReference type="CCDS" id="CCDS55025.1">
    <molecule id="Q96P44-1"/>
</dbReference>
<dbReference type="CCDS" id="CCDS83099.1">
    <molecule id="Q96P44-3"/>
</dbReference>
<dbReference type="RefSeq" id="NP_001305680.1">
    <molecule id="Q96P44-1"/>
    <property type="nucleotide sequence ID" value="NM_001318751.2"/>
</dbReference>
<dbReference type="RefSeq" id="NP_001305681.1">
    <molecule id="Q96P44-3"/>
    <property type="nucleotide sequence ID" value="NM_001318752.2"/>
</dbReference>
<dbReference type="RefSeq" id="NP_001305682.1">
    <property type="nucleotide sequence ID" value="NM_001318753.1"/>
</dbReference>
<dbReference type="RefSeq" id="NP_001305683.1">
    <property type="nucleotide sequence ID" value="NM_001318754.1"/>
</dbReference>
<dbReference type="RefSeq" id="NP_110447.2">
    <molecule id="Q96P44-1"/>
    <property type="nucleotide sequence ID" value="NM_030820.3"/>
</dbReference>
<dbReference type="RefSeq" id="XP_011513226.1">
    <molecule id="Q96P44-1"/>
    <property type="nucleotide sequence ID" value="XM_011514924.3"/>
</dbReference>
<dbReference type="RefSeq" id="XP_011513227.1">
    <molecule id="Q96P44-1"/>
    <property type="nucleotide sequence ID" value="XM_011514925.4"/>
</dbReference>
<dbReference type="RefSeq" id="XP_011513228.1">
    <molecule id="Q96P44-1"/>
    <property type="nucleotide sequence ID" value="XM_011514926.2"/>
</dbReference>
<dbReference type="RefSeq" id="XP_011513229.1">
    <molecule id="Q96P44-1"/>
    <property type="nucleotide sequence ID" value="XM_011514927.1"/>
</dbReference>
<dbReference type="RefSeq" id="XP_047275339.1">
    <molecule id="Q96P44-1"/>
    <property type="nucleotide sequence ID" value="XM_047419383.1"/>
</dbReference>
<dbReference type="RefSeq" id="XP_054212463.1">
    <molecule id="Q96P44-1"/>
    <property type="nucleotide sequence ID" value="XM_054356488.1"/>
</dbReference>
<dbReference type="RefSeq" id="XP_054212464.1">
    <molecule id="Q96P44-1"/>
    <property type="nucleotide sequence ID" value="XM_054356489.1"/>
</dbReference>
<dbReference type="RefSeq" id="XP_054212465.1">
    <molecule id="Q96P44-1"/>
    <property type="nucleotide sequence ID" value="XM_054356490.1"/>
</dbReference>
<dbReference type="RefSeq" id="XP_054212466.1">
    <molecule id="Q96P44-1"/>
    <property type="nucleotide sequence ID" value="XM_054356491.1"/>
</dbReference>
<dbReference type="RefSeq" id="XP_054212467.1">
    <molecule id="Q96P44-1"/>
    <property type="nucleotide sequence ID" value="XM_054356492.1"/>
</dbReference>
<dbReference type="SMR" id="Q96P44"/>
<dbReference type="BioGRID" id="123538">
    <property type="interactions" value="9"/>
</dbReference>
<dbReference type="ComplexPortal" id="CPX-1762">
    <property type="entry name" value="Collagen type XXI trimer"/>
</dbReference>
<dbReference type="FunCoup" id="Q96P44">
    <property type="interactions" value="121"/>
</dbReference>
<dbReference type="IntAct" id="Q96P44">
    <property type="interactions" value="8"/>
</dbReference>
<dbReference type="MINT" id="Q96P44"/>
<dbReference type="STRING" id="9606.ENSP00000244728"/>
<dbReference type="GlyCosmos" id="Q96P44">
    <property type="glycosylation" value="2 sites, 1 glycan"/>
</dbReference>
<dbReference type="GlyGen" id="Q96P44">
    <property type="glycosylation" value="4 sites, 1 O-linked glycan (1 site)"/>
</dbReference>
<dbReference type="iPTMnet" id="Q96P44"/>
<dbReference type="PhosphoSitePlus" id="Q96P44"/>
<dbReference type="BioMuta" id="COL21A1"/>
<dbReference type="DMDM" id="74752071"/>
<dbReference type="MassIVE" id="Q96P44"/>
<dbReference type="PaxDb" id="9606-ENSP00000244728"/>
<dbReference type="PeptideAtlas" id="Q96P44"/>
<dbReference type="ProteomicsDB" id="77615">
    <molecule id="Q96P44-1"/>
</dbReference>
<dbReference type="ProteomicsDB" id="77616">
    <molecule id="Q96P44-2"/>
</dbReference>
<dbReference type="ProteomicsDB" id="77617">
    <molecule id="Q96P44-3"/>
</dbReference>
<dbReference type="Antibodypedia" id="31049">
    <property type="antibodies" value="112 antibodies from 19 providers"/>
</dbReference>
<dbReference type="DNASU" id="81578"/>
<dbReference type="Ensembl" id="ENST00000244728.10">
    <molecule id="Q96P44-1"/>
    <property type="protein sequence ID" value="ENSP00000244728.5"/>
    <property type="gene ID" value="ENSG00000124749.18"/>
</dbReference>
<dbReference type="Ensembl" id="ENST00000370819.5">
    <molecule id="Q96P44-3"/>
    <property type="protein sequence ID" value="ENSP00000359855.1"/>
    <property type="gene ID" value="ENSG00000124749.18"/>
</dbReference>
<dbReference type="GeneID" id="81578"/>
<dbReference type="KEGG" id="hsa:81578"/>
<dbReference type="MANE-Select" id="ENST00000244728.10">
    <property type="protein sequence ID" value="ENSP00000244728.5"/>
    <property type="RefSeq nucleotide sequence ID" value="NM_030820.4"/>
    <property type="RefSeq protein sequence ID" value="NP_110447.2"/>
</dbReference>
<dbReference type="UCSC" id="uc003pcs.4">
    <molecule id="Q96P44-1"/>
    <property type="organism name" value="human"/>
</dbReference>
<dbReference type="AGR" id="HGNC:17025"/>
<dbReference type="CTD" id="81578"/>
<dbReference type="DisGeNET" id="81578"/>
<dbReference type="GeneCards" id="COL21A1"/>
<dbReference type="HGNC" id="HGNC:17025">
    <property type="gene designation" value="COL21A1"/>
</dbReference>
<dbReference type="HPA" id="ENSG00000124749">
    <property type="expression patterns" value="Tissue enhanced (cervix, placenta)"/>
</dbReference>
<dbReference type="MIM" id="610002">
    <property type="type" value="gene"/>
</dbReference>
<dbReference type="neXtProt" id="NX_Q96P44"/>
<dbReference type="OpenTargets" id="ENSG00000124749"/>
<dbReference type="PharmGKB" id="PA26714"/>
<dbReference type="VEuPathDB" id="HostDB:ENSG00000124749"/>
<dbReference type="eggNOG" id="KOG3544">
    <property type="taxonomic scope" value="Eukaryota"/>
</dbReference>
<dbReference type="GeneTree" id="ENSGT00940000162318"/>
<dbReference type="HOGENOM" id="CLU_001074_18_0_1"/>
<dbReference type="InParanoid" id="Q96P44"/>
<dbReference type="OMA" id="CAHCQLQ"/>
<dbReference type="PAN-GO" id="Q96P44">
    <property type="GO annotations" value="2 GO annotations based on evolutionary models"/>
</dbReference>
<dbReference type="PhylomeDB" id="Q96P44"/>
<dbReference type="TreeFam" id="TF332934"/>
<dbReference type="PathwayCommons" id="Q96P44"/>
<dbReference type="Reactome" id="R-HSA-1650814">
    <property type="pathway name" value="Collagen biosynthesis and modifying enzymes"/>
</dbReference>
<dbReference type="Reactome" id="R-HSA-8948216">
    <property type="pathway name" value="Collagen chain trimerization"/>
</dbReference>
<dbReference type="SIGNOR" id="Q96P44"/>
<dbReference type="BioGRID-ORCS" id="81578">
    <property type="hits" value="6 hits in 1137 CRISPR screens"/>
</dbReference>
<dbReference type="ChiTaRS" id="COL21A1">
    <property type="organism name" value="human"/>
</dbReference>
<dbReference type="GenomeRNAi" id="81578"/>
<dbReference type="Pharos" id="Q96P44">
    <property type="development level" value="Tbio"/>
</dbReference>
<dbReference type="PRO" id="PR:Q96P44"/>
<dbReference type="Proteomes" id="UP000005640">
    <property type="component" value="Chromosome 6"/>
</dbReference>
<dbReference type="RNAct" id="Q96P44">
    <property type="molecule type" value="protein"/>
</dbReference>
<dbReference type="Bgee" id="ENSG00000124749">
    <property type="expression patterns" value="Expressed in blood vessel layer and 168 other cell types or tissues"/>
</dbReference>
<dbReference type="ExpressionAtlas" id="Q96P44">
    <property type="expression patterns" value="baseline and differential"/>
</dbReference>
<dbReference type="GO" id="GO:0005581">
    <property type="term" value="C:collagen trimer"/>
    <property type="evidence" value="ECO:0007669"/>
    <property type="project" value="UniProtKB-KW"/>
</dbReference>
<dbReference type="GO" id="GO:0062023">
    <property type="term" value="C:collagen-containing extracellular matrix"/>
    <property type="evidence" value="ECO:0007005"/>
    <property type="project" value="BHF-UCL"/>
</dbReference>
<dbReference type="GO" id="GO:0005829">
    <property type="term" value="C:cytosol"/>
    <property type="evidence" value="ECO:0000314"/>
    <property type="project" value="HPA"/>
</dbReference>
<dbReference type="GO" id="GO:0005788">
    <property type="term" value="C:endoplasmic reticulum lumen"/>
    <property type="evidence" value="ECO:0000304"/>
    <property type="project" value="Reactome"/>
</dbReference>
<dbReference type="GO" id="GO:0005576">
    <property type="term" value="C:extracellular region"/>
    <property type="evidence" value="ECO:0000304"/>
    <property type="project" value="Reactome"/>
</dbReference>
<dbReference type="FunFam" id="3.40.50.410:FF:000041">
    <property type="entry name" value="Collagen alpha-1(XXI) chain isoform X1"/>
    <property type="match status" value="1"/>
</dbReference>
<dbReference type="FunFam" id="2.60.120.200:FF:000068">
    <property type="entry name" value="collagen alpha-1(XXI) chain isoform X1"/>
    <property type="match status" value="1"/>
</dbReference>
<dbReference type="Gene3D" id="2.60.120.200">
    <property type="match status" value="1"/>
</dbReference>
<dbReference type="Gene3D" id="1.20.5.320">
    <property type="entry name" value="6-Phosphogluconate Dehydrogenase, domain 3"/>
    <property type="match status" value="1"/>
</dbReference>
<dbReference type="Gene3D" id="3.40.50.410">
    <property type="entry name" value="von Willebrand factor, type A domain"/>
    <property type="match status" value="1"/>
</dbReference>
<dbReference type="InterPro" id="IPR008160">
    <property type="entry name" value="Collagen"/>
</dbReference>
<dbReference type="InterPro" id="IPR050938">
    <property type="entry name" value="Collagen_Structural_Proteins"/>
</dbReference>
<dbReference type="InterPro" id="IPR013320">
    <property type="entry name" value="ConA-like_dom_sf"/>
</dbReference>
<dbReference type="InterPro" id="IPR048287">
    <property type="entry name" value="TSPN-like_N"/>
</dbReference>
<dbReference type="InterPro" id="IPR002035">
    <property type="entry name" value="VWF_A"/>
</dbReference>
<dbReference type="InterPro" id="IPR036465">
    <property type="entry name" value="vWFA_dom_sf"/>
</dbReference>
<dbReference type="PANTHER" id="PTHR37456:SF6">
    <property type="entry name" value="COLLAGEN ALPHA-1(XXIII) CHAIN-LIKE ISOFORM X2"/>
    <property type="match status" value="1"/>
</dbReference>
<dbReference type="PANTHER" id="PTHR37456">
    <property type="entry name" value="SI:CH211-266K2.1"/>
    <property type="match status" value="1"/>
</dbReference>
<dbReference type="Pfam" id="PF01391">
    <property type="entry name" value="Collagen"/>
    <property type="match status" value="4"/>
</dbReference>
<dbReference type="Pfam" id="PF00092">
    <property type="entry name" value="VWA"/>
    <property type="match status" value="1"/>
</dbReference>
<dbReference type="PRINTS" id="PR00453">
    <property type="entry name" value="VWFADOMAIN"/>
</dbReference>
<dbReference type="SMART" id="SM00210">
    <property type="entry name" value="TSPN"/>
    <property type="match status" value="1"/>
</dbReference>
<dbReference type="SMART" id="SM00327">
    <property type="entry name" value="VWA"/>
    <property type="match status" value="1"/>
</dbReference>
<dbReference type="SUPFAM" id="SSF49899">
    <property type="entry name" value="Concanavalin A-like lectins/glucanases"/>
    <property type="match status" value="1"/>
</dbReference>
<dbReference type="SUPFAM" id="SSF53300">
    <property type="entry name" value="vWA-like"/>
    <property type="match status" value="1"/>
</dbReference>
<dbReference type="PROSITE" id="PS50234">
    <property type="entry name" value="VWFA"/>
    <property type="match status" value="1"/>
</dbReference>
<reference key="1">
    <citation type="journal article" date="2001" name="FEBS Lett.">
        <title>A new FACIT of the collagen family: COL21A1.</title>
        <authorList>
            <person name="Fitzgerald J."/>
            <person name="Bateman J.F."/>
        </authorList>
    </citation>
    <scope>NUCLEOTIDE SEQUENCE [MRNA] (ISOFORM 1)</scope>
    <scope>TISSUE SPECIFICITY</scope>
</reference>
<reference key="2">
    <citation type="journal article" date="2002" name="Genomics">
        <title>Genomic organization and characterization of the human type XXI collagen (COL21A1) gene.</title>
        <authorList>
            <person name="Chou M.-Y."/>
            <person name="Li H.-C."/>
        </authorList>
    </citation>
    <scope>NUCLEOTIDE SEQUENCE [GENOMIC DNA / MRNA] (ISOFORMS 1 AND 3)</scope>
    <scope>DEVELOPMENTAL STAGE</scope>
    <scope>TISSUE SPECIFICITY</scope>
    <scope>SUBCELLULAR LOCATION</scope>
    <scope>INDUCTION BY PDGF</scope>
</reference>
<reference key="3">
    <citation type="journal article" date="2001" name="Genome Res.">
        <title>Towards a catalog of human genes and proteins: sequencing and analysis of 500 novel complete protein coding human cDNAs.</title>
        <authorList>
            <person name="Wiemann S."/>
            <person name="Weil B."/>
            <person name="Wellenreuther R."/>
            <person name="Gassenhuber J."/>
            <person name="Glassl S."/>
            <person name="Ansorge W."/>
            <person name="Boecher M."/>
            <person name="Bloecker H."/>
            <person name="Bauersachs S."/>
            <person name="Blum H."/>
            <person name="Lauber J."/>
            <person name="Duesterhoeft A."/>
            <person name="Beyer A."/>
            <person name="Koehrer K."/>
            <person name="Strack N."/>
            <person name="Mewes H.-W."/>
            <person name="Ottenwaelder B."/>
            <person name="Obermaier B."/>
            <person name="Tampe J."/>
            <person name="Heubner D."/>
            <person name="Wambutt R."/>
            <person name="Korn B."/>
            <person name="Klein M."/>
            <person name="Poustka A."/>
        </authorList>
    </citation>
    <scope>NUCLEOTIDE SEQUENCE [LARGE SCALE MRNA] (ISOFORM 1)</scope>
    <source>
        <tissue>Brain</tissue>
    </source>
</reference>
<reference key="4">
    <citation type="journal article" date="2004" name="Proc. Natl. Acad. Sci. U.S.A.">
        <title>Large-scale cDNA transfection screening for genes related to cancer development and progression.</title>
        <authorList>
            <person name="Wan D."/>
            <person name="Gong Y."/>
            <person name="Qin W."/>
            <person name="Zhang P."/>
            <person name="Li J."/>
            <person name="Wei L."/>
            <person name="Zhou X."/>
            <person name="Li H."/>
            <person name="Qiu X."/>
            <person name="Zhong F."/>
            <person name="He L."/>
            <person name="Yu J."/>
            <person name="Yao G."/>
            <person name="Jiang H."/>
            <person name="Qian L."/>
            <person name="Yu Y."/>
            <person name="Shu H."/>
            <person name="Chen X."/>
            <person name="Xu H."/>
            <person name="Guo M."/>
            <person name="Pan Z."/>
            <person name="Chen Y."/>
            <person name="Ge C."/>
            <person name="Yang S."/>
            <person name="Gu J."/>
        </authorList>
    </citation>
    <scope>NUCLEOTIDE SEQUENCE [LARGE SCALE MRNA] (ISOFORM 2)</scope>
</reference>
<reference key="5">
    <citation type="journal article" date="2004" name="Nat. Genet.">
        <title>Complete sequencing and characterization of 21,243 full-length human cDNAs.</title>
        <authorList>
            <person name="Ota T."/>
            <person name="Suzuki Y."/>
            <person name="Nishikawa T."/>
            <person name="Otsuki T."/>
            <person name="Sugiyama T."/>
            <person name="Irie R."/>
            <person name="Wakamatsu A."/>
            <person name="Hayashi K."/>
            <person name="Sato H."/>
            <person name="Nagai K."/>
            <person name="Kimura K."/>
            <person name="Makita H."/>
            <person name="Sekine M."/>
            <person name="Obayashi M."/>
            <person name="Nishi T."/>
            <person name="Shibahara T."/>
            <person name="Tanaka T."/>
            <person name="Ishii S."/>
            <person name="Yamamoto J."/>
            <person name="Saito K."/>
            <person name="Kawai Y."/>
            <person name="Isono Y."/>
            <person name="Nakamura Y."/>
            <person name="Nagahari K."/>
            <person name="Murakami K."/>
            <person name="Yasuda T."/>
            <person name="Iwayanagi T."/>
            <person name="Wagatsuma M."/>
            <person name="Shiratori A."/>
            <person name="Sudo H."/>
            <person name="Hosoiri T."/>
            <person name="Kaku Y."/>
            <person name="Kodaira H."/>
            <person name="Kondo H."/>
            <person name="Sugawara M."/>
            <person name="Takahashi M."/>
            <person name="Kanda K."/>
            <person name="Yokoi T."/>
            <person name="Furuya T."/>
            <person name="Kikkawa E."/>
            <person name="Omura Y."/>
            <person name="Abe K."/>
            <person name="Kamihara K."/>
            <person name="Katsuta N."/>
            <person name="Sato K."/>
            <person name="Tanikawa M."/>
            <person name="Yamazaki M."/>
            <person name="Ninomiya K."/>
            <person name="Ishibashi T."/>
            <person name="Yamashita H."/>
            <person name="Murakawa K."/>
            <person name="Fujimori K."/>
            <person name="Tanai H."/>
            <person name="Kimata M."/>
            <person name="Watanabe M."/>
            <person name="Hiraoka S."/>
            <person name="Chiba Y."/>
            <person name="Ishida S."/>
            <person name="Ono Y."/>
            <person name="Takiguchi S."/>
            <person name="Watanabe S."/>
            <person name="Yosida M."/>
            <person name="Hotuta T."/>
            <person name="Kusano J."/>
            <person name="Kanehori K."/>
            <person name="Takahashi-Fujii A."/>
            <person name="Hara H."/>
            <person name="Tanase T.-O."/>
            <person name="Nomura Y."/>
            <person name="Togiya S."/>
            <person name="Komai F."/>
            <person name="Hara R."/>
            <person name="Takeuchi K."/>
            <person name="Arita M."/>
            <person name="Imose N."/>
            <person name="Musashino K."/>
            <person name="Yuuki H."/>
            <person name="Oshima A."/>
            <person name="Sasaki N."/>
            <person name="Aotsuka S."/>
            <person name="Yoshikawa Y."/>
            <person name="Matsunawa H."/>
            <person name="Ichihara T."/>
            <person name="Shiohata N."/>
            <person name="Sano S."/>
            <person name="Moriya S."/>
            <person name="Momiyama H."/>
            <person name="Satoh N."/>
            <person name="Takami S."/>
            <person name="Terashima Y."/>
            <person name="Suzuki O."/>
            <person name="Nakagawa S."/>
            <person name="Senoh A."/>
            <person name="Mizoguchi H."/>
            <person name="Goto Y."/>
            <person name="Shimizu F."/>
            <person name="Wakebe H."/>
            <person name="Hishigaki H."/>
            <person name="Watanabe T."/>
            <person name="Sugiyama A."/>
            <person name="Takemoto M."/>
            <person name="Kawakami B."/>
            <person name="Yamazaki M."/>
            <person name="Watanabe K."/>
            <person name="Kumagai A."/>
            <person name="Itakura S."/>
            <person name="Fukuzumi Y."/>
            <person name="Fujimori Y."/>
            <person name="Komiyama M."/>
            <person name="Tashiro H."/>
            <person name="Tanigami A."/>
            <person name="Fujiwara T."/>
            <person name="Ono T."/>
            <person name="Yamada K."/>
            <person name="Fujii Y."/>
            <person name="Ozaki K."/>
            <person name="Hirao M."/>
            <person name="Ohmori Y."/>
            <person name="Kawabata A."/>
            <person name="Hikiji T."/>
            <person name="Kobatake N."/>
            <person name="Inagaki H."/>
            <person name="Ikema Y."/>
            <person name="Okamoto S."/>
            <person name="Okitani R."/>
            <person name="Kawakami T."/>
            <person name="Noguchi S."/>
            <person name="Itoh T."/>
            <person name="Shigeta K."/>
            <person name="Senba T."/>
            <person name="Matsumura K."/>
            <person name="Nakajima Y."/>
            <person name="Mizuno T."/>
            <person name="Morinaga M."/>
            <person name="Sasaki M."/>
            <person name="Togashi T."/>
            <person name="Oyama M."/>
            <person name="Hata H."/>
            <person name="Watanabe M."/>
            <person name="Komatsu T."/>
            <person name="Mizushima-Sugano J."/>
            <person name="Satoh T."/>
            <person name="Shirai Y."/>
            <person name="Takahashi Y."/>
            <person name="Nakagawa K."/>
            <person name="Okumura K."/>
            <person name="Nagase T."/>
            <person name="Nomura N."/>
            <person name="Kikuchi H."/>
            <person name="Masuho Y."/>
            <person name="Yamashita R."/>
            <person name="Nakai K."/>
            <person name="Yada T."/>
            <person name="Nakamura Y."/>
            <person name="Ohara O."/>
            <person name="Isogai T."/>
            <person name="Sugano S."/>
        </authorList>
    </citation>
    <scope>NUCLEOTIDE SEQUENCE [LARGE SCALE MRNA] (ISOFORM 1)</scope>
    <scope>VARIANT MET-343</scope>
    <source>
        <tissue>Trachea</tissue>
    </source>
</reference>
<reference key="6">
    <citation type="journal article" date="2003" name="Nature">
        <title>The DNA sequence and analysis of human chromosome 6.</title>
        <authorList>
            <person name="Mungall A.J."/>
            <person name="Palmer S.A."/>
            <person name="Sims S.K."/>
            <person name="Edwards C.A."/>
            <person name="Ashurst J.L."/>
            <person name="Wilming L."/>
            <person name="Jones M.C."/>
            <person name="Horton R."/>
            <person name="Hunt S.E."/>
            <person name="Scott C.E."/>
            <person name="Gilbert J.G.R."/>
            <person name="Clamp M.E."/>
            <person name="Bethel G."/>
            <person name="Milne S."/>
            <person name="Ainscough R."/>
            <person name="Almeida J.P."/>
            <person name="Ambrose K.D."/>
            <person name="Andrews T.D."/>
            <person name="Ashwell R.I.S."/>
            <person name="Babbage A.K."/>
            <person name="Bagguley C.L."/>
            <person name="Bailey J."/>
            <person name="Banerjee R."/>
            <person name="Barker D.J."/>
            <person name="Barlow K.F."/>
            <person name="Bates K."/>
            <person name="Beare D.M."/>
            <person name="Beasley H."/>
            <person name="Beasley O."/>
            <person name="Bird C.P."/>
            <person name="Blakey S.E."/>
            <person name="Bray-Allen S."/>
            <person name="Brook J."/>
            <person name="Brown A.J."/>
            <person name="Brown J.Y."/>
            <person name="Burford D.C."/>
            <person name="Burrill W."/>
            <person name="Burton J."/>
            <person name="Carder C."/>
            <person name="Carter N.P."/>
            <person name="Chapman J.C."/>
            <person name="Clark S.Y."/>
            <person name="Clark G."/>
            <person name="Clee C.M."/>
            <person name="Clegg S."/>
            <person name="Cobley V."/>
            <person name="Collier R.E."/>
            <person name="Collins J.E."/>
            <person name="Colman L.K."/>
            <person name="Corby N.R."/>
            <person name="Coville G.J."/>
            <person name="Culley K.M."/>
            <person name="Dhami P."/>
            <person name="Davies J."/>
            <person name="Dunn M."/>
            <person name="Earthrowl M.E."/>
            <person name="Ellington A.E."/>
            <person name="Evans K.A."/>
            <person name="Faulkner L."/>
            <person name="Francis M.D."/>
            <person name="Frankish A."/>
            <person name="Frankland J."/>
            <person name="French L."/>
            <person name="Garner P."/>
            <person name="Garnett J."/>
            <person name="Ghori M.J."/>
            <person name="Gilby L.M."/>
            <person name="Gillson C.J."/>
            <person name="Glithero R.J."/>
            <person name="Grafham D.V."/>
            <person name="Grant M."/>
            <person name="Gribble S."/>
            <person name="Griffiths C."/>
            <person name="Griffiths M.N.D."/>
            <person name="Hall R."/>
            <person name="Halls K.S."/>
            <person name="Hammond S."/>
            <person name="Harley J.L."/>
            <person name="Hart E.A."/>
            <person name="Heath P.D."/>
            <person name="Heathcott R."/>
            <person name="Holmes S.J."/>
            <person name="Howden P.J."/>
            <person name="Howe K.L."/>
            <person name="Howell G.R."/>
            <person name="Huckle E."/>
            <person name="Humphray S.J."/>
            <person name="Humphries M.D."/>
            <person name="Hunt A.R."/>
            <person name="Johnson C.M."/>
            <person name="Joy A.A."/>
            <person name="Kay M."/>
            <person name="Keenan S.J."/>
            <person name="Kimberley A.M."/>
            <person name="King A."/>
            <person name="Laird G.K."/>
            <person name="Langford C."/>
            <person name="Lawlor S."/>
            <person name="Leongamornlert D.A."/>
            <person name="Leversha M."/>
            <person name="Lloyd C.R."/>
            <person name="Lloyd D.M."/>
            <person name="Loveland J.E."/>
            <person name="Lovell J."/>
            <person name="Martin S."/>
            <person name="Mashreghi-Mohammadi M."/>
            <person name="Maslen G.L."/>
            <person name="Matthews L."/>
            <person name="McCann O.T."/>
            <person name="McLaren S.J."/>
            <person name="McLay K."/>
            <person name="McMurray A."/>
            <person name="Moore M.J.F."/>
            <person name="Mullikin J.C."/>
            <person name="Niblett D."/>
            <person name="Nickerson T."/>
            <person name="Novik K.L."/>
            <person name="Oliver K."/>
            <person name="Overton-Larty E.K."/>
            <person name="Parker A."/>
            <person name="Patel R."/>
            <person name="Pearce A.V."/>
            <person name="Peck A.I."/>
            <person name="Phillimore B.J.C.T."/>
            <person name="Phillips S."/>
            <person name="Plumb R.W."/>
            <person name="Porter K.M."/>
            <person name="Ramsey Y."/>
            <person name="Ranby S.A."/>
            <person name="Rice C.M."/>
            <person name="Ross M.T."/>
            <person name="Searle S.M."/>
            <person name="Sehra H.K."/>
            <person name="Sheridan E."/>
            <person name="Skuce C.D."/>
            <person name="Smith S."/>
            <person name="Smith M."/>
            <person name="Spraggon L."/>
            <person name="Squares S.L."/>
            <person name="Steward C.A."/>
            <person name="Sycamore N."/>
            <person name="Tamlyn-Hall G."/>
            <person name="Tester J."/>
            <person name="Theaker A.J."/>
            <person name="Thomas D.W."/>
            <person name="Thorpe A."/>
            <person name="Tracey A."/>
            <person name="Tromans A."/>
            <person name="Tubby B."/>
            <person name="Wall M."/>
            <person name="Wallis J.M."/>
            <person name="West A.P."/>
            <person name="White S.S."/>
            <person name="Whitehead S.L."/>
            <person name="Whittaker H."/>
            <person name="Wild A."/>
            <person name="Willey D.J."/>
            <person name="Wilmer T.E."/>
            <person name="Wood J.M."/>
            <person name="Wray P.W."/>
            <person name="Wyatt J.C."/>
            <person name="Young L."/>
            <person name="Younger R.M."/>
            <person name="Bentley D.R."/>
            <person name="Coulson A."/>
            <person name="Durbin R.M."/>
            <person name="Hubbard T."/>
            <person name="Sulston J.E."/>
            <person name="Dunham I."/>
            <person name="Rogers J."/>
            <person name="Beck S."/>
        </authorList>
    </citation>
    <scope>NUCLEOTIDE SEQUENCE [LARGE SCALE GENOMIC DNA]</scope>
</reference>
<reference key="7">
    <citation type="journal article" date="2004" name="Genome Res.">
        <title>The status, quality, and expansion of the NIH full-length cDNA project: the Mammalian Gene Collection (MGC).</title>
        <authorList>
            <consortium name="The MGC Project Team"/>
        </authorList>
    </citation>
    <scope>NUCLEOTIDE SEQUENCE [LARGE SCALE MRNA] (ISOFORM 1)</scope>
    <source>
        <tissue>Brain</tissue>
    </source>
</reference>
<proteinExistence type="evidence at protein level"/>
<accession>Q96P44</accession>
<accession>A6NIX5</accession>
<accession>B2R8J9</accession>
<accession>Q49A51</accession>
<accession>Q71RF4</accession>
<accession>Q8WXV8</accession>
<accession>Q9H0V3</accession>
<protein>
    <recommendedName>
        <fullName>Collagen alpha-1(XXI) chain</fullName>
    </recommendedName>
</protein>
<evidence type="ECO:0000255" key="1"/>
<evidence type="ECO:0000255" key="2">
    <source>
        <dbReference type="PROSITE-ProRule" id="PRU00219"/>
    </source>
</evidence>
<evidence type="ECO:0000256" key="3">
    <source>
        <dbReference type="SAM" id="MobiDB-lite"/>
    </source>
</evidence>
<evidence type="ECO:0000269" key="4">
    <source>
    </source>
</evidence>
<evidence type="ECO:0000269" key="5">
    <source>
    </source>
</evidence>
<evidence type="ECO:0000269" key="6">
    <source>
    </source>
</evidence>
<evidence type="ECO:0000303" key="7">
    <source>
    </source>
</evidence>
<evidence type="ECO:0000303" key="8">
    <source>
    </source>
</evidence>
<evidence type="ECO:0000305" key="9"/>
<keyword id="KW-0025">Alternative splicing</keyword>
<keyword id="KW-0176">Collagen</keyword>
<keyword id="KW-0963">Cytoplasm</keyword>
<keyword id="KW-0272">Extracellular matrix</keyword>
<keyword id="KW-0325">Glycoprotein</keyword>
<keyword id="KW-1267">Proteomics identification</keyword>
<keyword id="KW-1185">Reference proteome</keyword>
<keyword id="KW-0677">Repeat</keyword>
<keyword id="KW-0964">Secreted</keyword>
<keyword id="KW-0732">Signal</keyword>
<gene>
    <name type="primary">COL21A1</name>
    <name type="synonym">COL1AL</name>
    <name type="ORF">FP633</name>
</gene>
<comment type="subcellular location">
    <subcellularLocation>
        <location evidence="5">Secreted</location>
        <location evidence="5">Extracellular space</location>
        <location evidence="5">Extracellular matrix</location>
    </subcellularLocation>
    <subcellularLocation>
        <location evidence="5">Cytoplasm</location>
    </subcellularLocation>
    <text>Found in the extracellular matrix component of blood vessel walls and in the cytoplasm of cultured human aortic smooth muscle.</text>
</comment>
<comment type="alternative products">
    <event type="alternative splicing"/>
    <isoform>
        <id>Q96P44-1</id>
        <name>1</name>
        <sequence type="displayed"/>
    </isoform>
    <isoform>
        <id>Q96P44-2</id>
        <name>2</name>
        <sequence type="described" ref="VSP_031083 VSP_031085 VSP_031086"/>
    </isoform>
    <isoform>
        <id>Q96P44-3</id>
        <name>3</name>
        <sequence type="described" ref="VSP_031084"/>
    </isoform>
</comment>
<comment type="tissue specificity">
    <text evidence="4 5">Highly expressed in lymph node, jejunum, pancreas, stomach, trachea, testis, uterus and placenta; moderately expressed in brain, colon, lung, prostate, spinal cord, salivary gland and vascular smooth-muscle cells and very weakly expressed in heart, liver, kidney, bone marrow, spleen, thymus, skeletal muscle, adrenal gland and peripheral leukocytes. Expression in heart was higher in the right ventricle and atrium than in the left ventricle and atrium.</text>
</comment>
<comment type="developmental stage">
    <text evidence="5">Highest expression observed at the fetal stage. Expressed by smooth-muscle cells in the artery wall in a PDGF-dependent way.</text>
</comment>
<comment type="induction">
    <text evidence="5">Stimulated by PDGF/platelet-derived growth factor.</text>
</comment>
<comment type="similarity">
    <text evidence="9">Belongs to the fibril-associated collagens with interrupted helices (FACIT) family.</text>
</comment>
<comment type="sequence caution" evidence="9">
    <conflict type="frameshift">
        <sequence resource="EMBL-CDS" id="AAH45597"/>
    </conflict>
</comment>
<sequence length="957" mass="99369">MAHYITFLCMVLVLLLQNSVLAEDGEVRSSCRTAPTDLVFILDGSYSVGPENFEIVKKWLVNITKNFDIGPKFIQVGVVQYSDYPVLEIPLGSYDSGEHLTAAVESILYLGGNTKTGKAIQFALDYLFAKSSRFLTKIAVVLTDGKSQDDVKDAAQAARDSKITLFAIGVGSETEDAELRAIANKPSSTYVFYVEDYIAISKIREVMKQKLCEESVCPTRIPVAARDERGFDILLGLDVNKKVKKRIQLSPKKIKGYEVTSKVDLSELTSNVFPEGLPPSYVFVSTQRFKVKKIWDLWRILTIDGRPQIAVTLNGVDKILLFTTTSVINGSQVVTFANPQVKTLFDEGWHQIRLLVTEQDVTLYIDDQQIENKPLHPVLGILINGQTQIGKYSGKEETVQFDVQKLRIYCDPEQNNRETACEIPGFNGECLNGPSDVGSTPAPCICPPGKPGLQGPKGDPGLPGNPGYPGQPGQDGKPGYQGIAGTPGVPGSPGIQGARGLPGYKGEPGRDGDKGDRGLPGFPGLHGMPGSKGEMGAKGDKGSPGFYGKKGAKGEKGNAGFPGLPGPAGEPGRHGKDGLMGSPGFKGEAGSPGAPGQDGTRGEPGIPGFPGNRGLMGQKGEIGPPGQQGKKGAPGMPGLMGSNGSPGQPGTPGSKGSKGEPGIQGMPGASGLKGEPGATGSPGEPGYMGLPGIQGKKGDKGNQGEKGIQGQKGENGRQGIPGQQGIQGHHGAKGERGEKGEPGVRGAIGSKGESGVDGLMGPAGPKGQPGDPGPQGPPGLDGKPGREFSEQFIRQVCTDVIRAQLPVLLQSGRIRNCDHCLSQHGSPGIPGPPGPIGPEGPRGLPGLPGRDGVPGLVGVPGRPGVRGLKGLPGRNGEKGSQGFGYPGEQGPPGPPGPEGPPGISKEGPPGDPGLPGKDGDHGKPGIQGQPGPPGICDPSLCFSVIARRDPFRKGPNY</sequence>